<reference key="1">
    <citation type="journal article" date="2008" name="J. Bacteriol.">
        <title>Genome of the actinomycete plant pathogen Clavibacter michiganensis subsp. sepedonicus suggests recent niche adaptation.</title>
        <authorList>
            <person name="Bentley S.D."/>
            <person name="Corton C."/>
            <person name="Brown S.E."/>
            <person name="Barron A."/>
            <person name="Clark L."/>
            <person name="Doggett J."/>
            <person name="Harris B."/>
            <person name="Ormond D."/>
            <person name="Quail M.A."/>
            <person name="May G."/>
            <person name="Francis D."/>
            <person name="Knudson D."/>
            <person name="Parkhill J."/>
            <person name="Ishimaru C.A."/>
        </authorList>
    </citation>
    <scope>NUCLEOTIDE SEQUENCE [LARGE SCALE GENOMIC DNA]</scope>
    <source>
        <strain>ATCC 33113 / DSM 20744 / JCM 9667 / LMG 2889 / ICMP 2535 / C-1</strain>
    </source>
</reference>
<dbReference type="EMBL" id="AM849034">
    <property type="protein sequence ID" value="CAQ02031.1"/>
    <property type="molecule type" value="Genomic_DNA"/>
</dbReference>
<dbReference type="RefSeq" id="WP_012299262.1">
    <property type="nucleotide sequence ID" value="NZ_MZMN01000003.1"/>
</dbReference>
<dbReference type="SMR" id="B0RED9"/>
<dbReference type="STRING" id="31964.CMS1929"/>
<dbReference type="KEGG" id="cms:CMS1929"/>
<dbReference type="eggNOG" id="COG0636">
    <property type="taxonomic scope" value="Bacteria"/>
</dbReference>
<dbReference type="HOGENOM" id="CLU_148047_5_2_11"/>
<dbReference type="OrthoDB" id="3183855at2"/>
<dbReference type="Proteomes" id="UP000001318">
    <property type="component" value="Chromosome"/>
</dbReference>
<dbReference type="GO" id="GO:0005886">
    <property type="term" value="C:plasma membrane"/>
    <property type="evidence" value="ECO:0007669"/>
    <property type="project" value="UniProtKB-SubCell"/>
</dbReference>
<dbReference type="GO" id="GO:0045259">
    <property type="term" value="C:proton-transporting ATP synthase complex"/>
    <property type="evidence" value="ECO:0007669"/>
    <property type="project" value="UniProtKB-KW"/>
</dbReference>
<dbReference type="GO" id="GO:0033177">
    <property type="term" value="C:proton-transporting two-sector ATPase complex, proton-transporting domain"/>
    <property type="evidence" value="ECO:0007669"/>
    <property type="project" value="InterPro"/>
</dbReference>
<dbReference type="GO" id="GO:0008289">
    <property type="term" value="F:lipid binding"/>
    <property type="evidence" value="ECO:0007669"/>
    <property type="project" value="UniProtKB-KW"/>
</dbReference>
<dbReference type="GO" id="GO:0046933">
    <property type="term" value="F:proton-transporting ATP synthase activity, rotational mechanism"/>
    <property type="evidence" value="ECO:0007669"/>
    <property type="project" value="UniProtKB-UniRule"/>
</dbReference>
<dbReference type="CDD" id="cd18121">
    <property type="entry name" value="ATP-synt_Fo_c"/>
    <property type="match status" value="1"/>
</dbReference>
<dbReference type="FunFam" id="1.20.20.10:FF:000002">
    <property type="entry name" value="ATP synthase subunit c"/>
    <property type="match status" value="1"/>
</dbReference>
<dbReference type="Gene3D" id="1.20.20.10">
    <property type="entry name" value="F1F0 ATP synthase subunit C"/>
    <property type="match status" value="1"/>
</dbReference>
<dbReference type="HAMAP" id="MF_01396">
    <property type="entry name" value="ATP_synth_c_bact"/>
    <property type="match status" value="1"/>
</dbReference>
<dbReference type="InterPro" id="IPR005953">
    <property type="entry name" value="ATP_synth_csu_bac/chlpt"/>
</dbReference>
<dbReference type="InterPro" id="IPR000454">
    <property type="entry name" value="ATP_synth_F0_csu"/>
</dbReference>
<dbReference type="InterPro" id="IPR020537">
    <property type="entry name" value="ATP_synth_F0_csu_DDCD_BS"/>
</dbReference>
<dbReference type="InterPro" id="IPR038662">
    <property type="entry name" value="ATP_synth_F0_csu_sf"/>
</dbReference>
<dbReference type="InterPro" id="IPR002379">
    <property type="entry name" value="ATPase_proteolipid_c-like_dom"/>
</dbReference>
<dbReference type="InterPro" id="IPR035921">
    <property type="entry name" value="F/V-ATP_Csub_sf"/>
</dbReference>
<dbReference type="NCBIfam" id="TIGR01260">
    <property type="entry name" value="ATP_synt_c"/>
    <property type="match status" value="1"/>
</dbReference>
<dbReference type="NCBIfam" id="NF005900">
    <property type="entry name" value="PRK07874.1"/>
    <property type="match status" value="1"/>
</dbReference>
<dbReference type="PANTHER" id="PTHR10031">
    <property type="entry name" value="ATP SYNTHASE LIPID-BINDING PROTEIN, MITOCHONDRIAL"/>
    <property type="match status" value="1"/>
</dbReference>
<dbReference type="PANTHER" id="PTHR10031:SF0">
    <property type="entry name" value="ATPASE PROTEIN 9"/>
    <property type="match status" value="1"/>
</dbReference>
<dbReference type="Pfam" id="PF00137">
    <property type="entry name" value="ATP-synt_C"/>
    <property type="match status" value="1"/>
</dbReference>
<dbReference type="PRINTS" id="PR00124">
    <property type="entry name" value="ATPASEC"/>
</dbReference>
<dbReference type="SUPFAM" id="SSF81333">
    <property type="entry name" value="F1F0 ATP synthase subunit C"/>
    <property type="match status" value="1"/>
</dbReference>
<dbReference type="PROSITE" id="PS00605">
    <property type="entry name" value="ATPASE_C"/>
    <property type="match status" value="1"/>
</dbReference>
<accession>B0RED9</accession>
<proteinExistence type="inferred from homology"/>
<protein>
    <recommendedName>
        <fullName evidence="1">ATP synthase subunit c</fullName>
    </recommendedName>
    <alternativeName>
        <fullName evidence="1">ATP synthase F(0) sector subunit c</fullName>
    </alternativeName>
    <alternativeName>
        <fullName evidence="1">F-type ATPase subunit c</fullName>
        <shortName evidence="1">F-ATPase subunit c</shortName>
    </alternativeName>
    <alternativeName>
        <fullName evidence="1">Lipid-binding protein</fullName>
    </alternativeName>
</protein>
<keyword id="KW-0066">ATP synthesis</keyword>
<keyword id="KW-1003">Cell membrane</keyword>
<keyword id="KW-0138">CF(0)</keyword>
<keyword id="KW-0375">Hydrogen ion transport</keyword>
<keyword id="KW-0406">Ion transport</keyword>
<keyword id="KW-0446">Lipid-binding</keyword>
<keyword id="KW-0472">Membrane</keyword>
<keyword id="KW-0812">Transmembrane</keyword>
<keyword id="KW-1133">Transmembrane helix</keyword>
<keyword id="KW-0813">Transport</keyword>
<comment type="function">
    <text evidence="1">F(1)F(0) ATP synthase produces ATP from ADP in the presence of a proton or sodium gradient. F-type ATPases consist of two structural domains, F(1) containing the extramembraneous catalytic core and F(0) containing the membrane proton channel, linked together by a central stalk and a peripheral stalk. During catalysis, ATP synthesis in the catalytic domain of F(1) is coupled via a rotary mechanism of the central stalk subunits to proton translocation.</text>
</comment>
<comment type="function">
    <text evidence="1">Key component of the F(0) channel; it plays a direct role in translocation across the membrane. A homomeric c-ring of between 10-14 subunits forms the central stalk rotor element with the F(1) delta and epsilon subunits.</text>
</comment>
<comment type="subunit">
    <text evidence="1">F-type ATPases have 2 components, F(1) - the catalytic core - and F(0) - the membrane proton channel. F(1) has five subunits: alpha(3), beta(3), gamma(1), delta(1), epsilon(1). F(0) has three main subunits: a(1), b(2) and c(10-14). The alpha and beta chains form an alternating ring which encloses part of the gamma chain. F(1) is attached to F(0) by a central stalk formed by the gamma and epsilon chains, while a peripheral stalk is formed by the delta and b chains.</text>
</comment>
<comment type="subcellular location">
    <subcellularLocation>
        <location evidence="1">Cell membrane</location>
        <topology evidence="1">Multi-pass membrane protein</topology>
    </subcellularLocation>
</comment>
<comment type="similarity">
    <text evidence="1">Belongs to the ATPase C chain family.</text>
</comment>
<evidence type="ECO:0000255" key="1">
    <source>
        <dbReference type="HAMAP-Rule" id="MF_01396"/>
    </source>
</evidence>
<name>ATPL_CLASE</name>
<sequence>MDPIITAEITGNIATVGYGLAAIGPGIGVGIVAGKTVEAMARQPEMAGSLRTTMFLGIAFSEALALIGLATYFIFTN</sequence>
<organism>
    <name type="scientific">Clavibacter sepedonicus</name>
    <name type="common">Clavibacter michiganensis subsp. sepedonicus</name>
    <dbReference type="NCBI Taxonomy" id="31964"/>
    <lineage>
        <taxon>Bacteria</taxon>
        <taxon>Bacillati</taxon>
        <taxon>Actinomycetota</taxon>
        <taxon>Actinomycetes</taxon>
        <taxon>Micrococcales</taxon>
        <taxon>Microbacteriaceae</taxon>
        <taxon>Clavibacter</taxon>
    </lineage>
</organism>
<gene>
    <name evidence="1" type="primary">atpE</name>
    <name type="ordered locus">CMS1929</name>
</gene>
<feature type="chain" id="PRO_1000184350" description="ATP synthase subunit c">
    <location>
        <begin position="1"/>
        <end position="77"/>
    </location>
</feature>
<feature type="transmembrane region" description="Helical" evidence="1">
    <location>
        <begin position="13"/>
        <end position="33"/>
    </location>
</feature>
<feature type="transmembrane region" description="Helical" evidence="1">
    <location>
        <begin position="55"/>
        <end position="75"/>
    </location>
</feature>
<feature type="site" description="Reversibly protonated during proton transport" evidence="1">
    <location>
        <position position="62"/>
    </location>
</feature>